<gene>
    <name type="primary">Acot11</name>
    <name type="synonym">Bfit</name>
    <name type="synonym">Thea</name>
</gene>
<protein>
    <recommendedName>
        <fullName evidence="2">Acyl-coenzyme A thioesterase 11</fullName>
        <shortName evidence="2">Acyl-CoA thioesterase 11</shortName>
        <ecNumber evidence="2">3.1.2.-</ecNumber>
    </recommendedName>
    <alternativeName>
        <fullName>Acyl-CoA thioester hydrolase 11</fullName>
    </alternativeName>
    <alternativeName>
        <fullName>Adipose-associated thioesterase</fullName>
    </alternativeName>
    <alternativeName>
        <fullName>Brown fat-inducible thioesterase</fullName>
        <shortName>BFIT</shortName>
    </alternativeName>
    <alternativeName>
        <fullName evidence="2">Palmitoyl-coenzyme A thioesterase</fullName>
        <ecNumber evidence="2">3.1.2.2</ecNumber>
    </alternativeName>
</protein>
<accession>Q8VHQ9</accession>
<dbReference type="EC" id="3.1.2.-" evidence="2"/>
<dbReference type="EC" id="3.1.2.2" evidence="2"/>
<dbReference type="EMBL" id="AF416923">
    <property type="protein sequence ID" value="AAL40939.1"/>
    <property type="molecule type" value="mRNA"/>
</dbReference>
<dbReference type="EMBL" id="BC042492">
    <property type="protein sequence ID" value="AAH42492.1"/>
    <property type="molecule type" value="mRNA"/>
</dbReference>
<dbReference type="CCDS" id="CCDS18426.1"/>
<dbReference type="RefSeq" id="NP_079866.2">
    <property type="nucleotide sequence ID" value="NM_025590.4"/>
</dbReference>
<dbReference type="EMDB" id="EMD-21414"/>
<dbReference type="SMR" id="Q8VHQ9"/>
<dbReference type="BioGRID" id="236860">
    <property type="interactions" value="3"/>
</dbReference>
<dbReference type="FunCoup" id="Q8VHQ9">
    <property type="interactions" value="581"/>
</dbReference>
<dbReference type="STRING" id="10090.ENSMUSP00000069636"/>
<dbReference type="GlyGen" id="Q8VHQ9">
    <property type="glycosylation" value="2 sites, 1 N-linked glycan (1 site)"/>
</dbReference>
<dbReference type="iPTMnet" id="Q8VHQ9"/>
<dbReference type="PhosphoSitePlus" id="Q8VHQ9"/>
<dbReference type="SwissPalm" id="Q8VHQ9"/>
<dbReference type="PaxDb" id="10090-ENSMUSP00000099823"/>
<dbReference type="ProteomicsDB" id="285842"/>
<dbReference type="Pumba" id="Q8VHQ9"/>
<dbReference type="Antibodypedia" id="33192">
    <property type="antibodies" value="251 antibodies from 30 providers"/>
</dbReference>
<dbReference type="DNASU" id="329910"/>
<dbReference type="Ensembl" id="ENSMUST00000102762.10">
    <property type="protein sequence ID" value="ENSMUSP00000099823.4"/>
    <property type="gene ID" value="ENSMUSG00000034853.17"/>
</dbReference>
<dbReference type="GeneID" id="329910"/>
<dbReference type="KEGG" id="mmu:329910"/>
<dbReference type="UCSC" id="uc008tyv.2">
    <property type="organism name" value="mouse"/>
</dbReference>
<dbReference type="AGR" id="MGI:1913736"/>
<dbReference type="CTD" id="26027"/>
<dbReference type="MGI" id="MGI:1913736">
    <property type="gene designation" value="Acot11"/>
</dbReference>
<dbReference type="VEuPathDB" id="HostDB:ENSMUSG00000034853"/>
<dbReference type="eggNOG" id="KOG2763">
    <property type="taxonomic scope" value="Eukaryota"/>
</dbReference>
<dbReference type="GeneTree" id="ENSGT00940000156460"/>
<dbReference type="HOGENOM" id="CLU_035725_0_0_1"/>
<dbReference type="InParanoid" id="Q8VHQ9"/>
<dbReference type="OMA" id="YEQCEVI"/>
<dbReference type="OrthoDB" id="3184331at2759"/>
<dbReference type="PhylomeDB" id="Q8VHQ9"/>
<dbReference type="TreeFam" id="TF328368"/>
<dbReference type="BRENDA" id="3.1.2.20">
    <property type="organism ID" value="3474"/>
</dbReference>
<dbReference type="Reactome" id="R-MMU-77289">
    <property type="pathway name" value="Mitochondrial Fatty Acid Beta-Oxidation"/>
</dbReference>
<dbReference type="UniPathway" id="UPA00199"/>
<dbReference type="BioGRID-ORCS" id="329910">
    <property type="hits" value="2 hits in 78 CRISPR screens"/>
</dbReference>
<dbReference type="ChiTaRS" id="Acot11">
    <property type="organism name" value="mouse"/>
</dbReference>
<dbReference type="PRO" id="PR:Q8VHQ9"/>
<dbReference type="Proteomes" id="UP000000589">
    <property type="component" value="Chromosome 4"/>
</dbReference>
<dbReference type="RNAct" id="Q8VHQ9">
    <property type="molecule type" value="protein"/>
</dbReference>
<dbReference type="Bgee" id="ENSMUSG00000034853">
    <property type="expression patterns" value="Expressed in gastrula and 206 other cell types or tissues"/>
</dbReference>
<dbReference type="ExpressionAtlas" id="Q8VHQ9">
    <property type="expression patterns" value="baseline and differential"/>
</dbReference>
<dbReference type="GO" id="GO:0005737">
    <property type="term" value="C:cytoplasm"/>
    <property type="evidence" value="ECO:0000250"/>
    <property type="project" value="UniProtKB"/>
</dbReference>
<dbReference type="GO" id="GO:0005829">
    <property type="term" value="C:cytosol"/>
    <property type="evidence" value="ECO:0007669"/>
    <property type="project" value="Ensembl"/>
</dbReference>
<dbReference type="GO" id="GO:0005759">
    <property type="term" value="C:mitochondrial matrix"/>
    <property type="evidence" value="ECO:0000250"/>
    <property type="project" value="UniProtKB"/>
</dbReference>
<dbReference type="GO" id="GO:0052689">
    <property type="term" value="F:carboxylic ester hydrolase activity"/>
    <property type="evidence" value="ECO:0007669"/>
    <property type="project" value="UniProtKB-KW"/>
</dbReference>
<dbReference type="GO" id="GO:0047617">
    <property type="term" value="F:fatty acyl-CoA hydrolase activity"/>
    <property type="evidence" value="ECO:0000250"/>
    <property type="project" value="UniProtKB"/>
</dbReference>
<dbReference type="GO" id="GO:0008289">
    <property type="term" value="F:lipid binding"/>
    <property type="evidence" value="ECO:0007669"/>
    <property type="project" value="InterPro"/>
</dbReference>
<dbReference type="GO" id="GO:0052816">
    <property type="term" value="F:long-chain fatty acyl-CoA hydrolase activity"/>
    <property type="evidence" value="ECO:0000250"/>
    <property type="project" value="UniProtKB"/>
</dbReference>
<dbReference type="GO" id="GO:0006631">
    <property type="term" value="P:fatty acid metabolic process"/>
    <property type="evidence" value="ECO:0000303"/>
    <property type="project" value="UniProtKB"/>
</dbReference>
<dbReference type="GO" id="GO:0035556">
    <property type="term" value="P:intracellular signal transduction"/>
    <property type="evidence" value="ECO:0000303"/>
    <property type="project" value="UniProtKB"/>
</dbReference>
<dbReference type="GO" id="GO:0120163">
    <property type="term" value="P:negative regulation of cold-induced thermogenesis"/>
    <property type="evidence" value="ECO:0000315"/>
    <property type="project" value="YuBioLab"/>
</dbReference>
<dbReference type="GO" id="GO:0009409">
    <property type="term" value="P:response to cold"/>
    <property type="evidence" value="ECO:0000270"/>
    <property type="project" value="BHF-UCL"/>
</dbReference>
<dbReference type="GO" id="GO:0009266">
    <property type="term" value="P:response to temperature stimulus"/>
    <property type="evidence" value="ECO:0000270"/>
    <property type="project" value="UniProtKB"/>
</dbReference>
<dbReference type="CDD" id="cd03442">
    <property type="entry name" value="BFIT_BACH"/>
    <property type="match status" value="2"/>
</dbReference>
<dbReference type="FunFam" id="3.10.129.10:FF:000011">
    <property type="entry name" value="Acyl-coenzyme A thioesterase 11"/>
    <property type="match status" value="1"/>
</dbReference>
<dbReference type="FunFam" id="3.10.129.10:FF:000020">
    <property type="entry name" value="Acyl-coenzyme A thioesterase 11"/>
    <property type="match status" value="1"/>
</dbReference>
<dbReference type="FunFam" id="3.30.530.20:FF:000012">
    <property type="entry name" value="Acyl-coenzyme A thioesterase 11"/>
    <property type="match status" value="1"/>
</dbReference>
<dbReference type="Gene3D" id="3.30.530.20">
    <property type="match status" value="1"/>
</dbReference>
<dbReference type="Gene3D" id="3.10.129.10">
    <property type="entry name" value="Hotdog Thioesterase"/>
    <property type="match status" value="2"/>
</dbReference>
<dbReference type="InterPro" id="IPR040170">
    <property type="entry name" value="Cytosol_ACT"/>
</dbReference>
<dbReference type="InterPro" id="IPR033120">
    <property type="entry name" value="HOTDOG_ACOT"/>
</dbReference>
<dbReference type="InterPro" id="IPR029069">
    <property type="entry name" value="HotDog_dom_sf"/>
</dbReference>
<dbReference type="InterPro" id="IPR023393">
    <property type="entry name" value="START-like_dom_sf"/>
</dbReference>
<dbReference type="InterPro" id="IPR002913">
    <property type="entry name" value="START_lipid-bd_dom"/>
</dbReference>
<dbReference type="InterPro" id="IPR006683">
    <property type="entry name" value="Thioestr_dom"/>
</dbReference>
<dbReference type="PANTHER" id="PTHR11049">
    <property type="entry name" value="ACYL COENZYME A THIOESTER HYDROLASE"/>
    <property type="match status" value="1"/>
</dbReference>
<dbReference type="PANTHER" id="PTHR11049:SF1">
    <property type="entry name" value="ACYL-COENZYME A THIOESTERASE 11"/>
    <property type="match status" value="1"/>
</dbReference>
<dbReference type="Pfam" id="PF03061">
    <property type="entry name" value="4HBT"/>
    <property type="match status" value="2"/>
</dbReference>
<dbReference type="Pfam" id="PF01852">
    <property type="entry name" value="START"/>
    <property type="match status" value="1"/>
</dbReference>
<dbReference type="SMART" id="SM00234">
    <property type="entry name" value="START"/>
    <property type="match status" value="1"/>
</dbReference>
<dbReference type="SUPFAM" id="SSF55961">
    <property type="entry name" value="Bet v1-like"/>
    <property type="match status" value="1"/>
</dbReference>
<dbReference type="SUPFAM" id="SSF54637">
    <property type="entry name" value="Thioesterase/thiol ester dehydrase-isomerase"/>
    <property type="match status" value="2"/>
</dbReference>
<dbReference type="PROSITE" id="PS51770">
    <property type="entry name" value="HOTDOG_ACOT"/>
    <property type="match status" value="2"/>
</dbReference>
<dbReference type="PROSITE" id="PS50848">
    <property type="entry name" value="START"/>
    <property type="match status" value="1"/>
</dbReference>
<reference key="1">
    <citation type="journal article" date="2001" name="Biochem. J.">
        <title>BFIT, a unique acyl-CoA thioesterase induced in thermogenic brown adipose tissue: cloning, organization of the human gene and assessment of a potential link to obesity.</title>
        <authorList>
            <person name="Adams S.H."/>
            <person name="Chui C."/>
            <person name="Schilbach S.L."/>
            <person name="Yu X.X."/>
            <person name="Goddard A.D."/>
            <person name="Grimaldi J.C."/>
            <person name="Lee J."/>
            <person name="Dowd P."/>
            <person name="Colman S."/>
            <person name="Lewin D.A."/>
        </authorList>
    </citation>
    <scope>NUCLEOTIDE SEQUENCE [MRNA]</scope>
    <source>
        <strain>FVB/N</strain>
    </source>
</reference>
<reference key="2">
    <citation type="journal article" date="2004" name="Genome Res.">
        <title>The status, quality, and expansion of the NIH full-length cDNA project: the Mammalian Gene Collection (MGC).</title>
        <authorList>
            <consortium name="The MGC Project Team"/>
        </authorList>
    </citation>
    <scope>NUCLEOTIDE SEQUENCE [LARGE SCALE MRNA]</scope>
    <source>
        <strain>FVB/N</strain>
        <tissue>Kidney</tissue>
    </source>
</reference>
<reference key="3">
    <citation type="journal article" date="2010" name="Cell">
        <title>A tissue-specific atlas of mouse protein phosphorylation and expression.</title>
        <authorList>
            <person name="Huttlin E.L."/>
            <person name="Jedrychowski M.P."/>
            <person name="Elias J.E."/>
            <person name="Goswami T."/>
            <person name="Rad R."/>
            <person name="Beausoleil S.A."/>
            <person name="Villen J."/>
            <person name="Haas W."/>
            <person name="Sowa M.E."/>
            <person name="Gygi S.P."/>
        </authorList>
    </citation>
    <scope>PHOSPHORYLATION [LARGE SCALE ANALYSIS] AT SER-15 AND SER-25</scope>
    <scope>IDENTIFICATION BY MASS SPECTROMETRY [LARGE SCALE ANALYSIS]</scope>
    <source>
        <tissue>Brain</tissue>
        <tissue>Brown adipose tissue</tissue>
        <tissue>Heart</tissue>
        <tissue>Kidney</tissue>
        <tissue>Lung</tissue>
    </source>
</reference>
<name>ACO11_MOUSE</name>
<feature type="transit peptide" description="Mitochondrion" evidence="3">
    <location>
        <begin position="1"/>
        <end position="20"/>
    </location>
</feature>
<feature type="chain" id="PRO_0000053814" description="Acyl-coenzyme A thioesterase 11">
    <location>
        <begin position="21"/>
        <end position="594"/>
    </location>
</feature>
<feature type="domain" description="HotDog ACOT-type 1" evidence="5">
    <location>
        <begin position="45"/>
        <end position="157"/>
    </location>
</feature>
<feature type="domain" description="HotDog ACOT-type 2" evidence="5">
    <location>
        <begin position="217"/>
        <end position="330"/>
    </location>
</feature>
<feature type="domain" description="START" evidence="4">
    <location>
        <begin position="370"/>
        <end position="582"/>
    </location>
</feature>
<feature type="region of interest" description="Disordered" evidence="6">
    <location>
        <begin position="20"/>
        <end position="43"/>
    </location>
</feature>
<feature type="binding site" evidence="1">
    <location>
        <begin position="93"/>
        <end position="95"/>
    </location>
    <ligand>
        <name>CoA</name>
        <dbReference type="ChEBI" id="CHEBI:57287"/>
    </ligand>
</feature>
<feature type="binding site" evidence="1">
    <location>
        <begin position="122"/>
        <end position="124"/>
    </location>
    <ligand>
        <name>CoA</name>
        <dbReference type="ChEBI" id="CHEBI:57287"/>
    </ligand>
</feature>
<feature type="binding site" evidence="1">
    <location>
        <position position="183"/>
    </location>
    <ligand>
        <name>CoA</name>
        <dbReference type="ChEBI" id="CHEBI:57287"/>
    </ligand>
</feature>
<feature type="binding site" evidence="1">
    <location>
        <begin position="272"/>
        <end position="274"/>
    </location>
    <ligand>
        <name>CoA</name>
        <dbReference type="ChEBI" id="CHEBI:57287"/>
    </ligand>
</feature>
<feature type="modified residue" description="Phosphoserine" evidence="7">
    <location>
        <position position="15"/>
    </location>
</feature>
<feature type="modified residue" description="Phosphoserine" evidence="7">
    <location>
        <position position="25"/>
    </location>
</feature>
<sequence length="594" mass="67355">MIQNVGNHLRRGFASMFSNRTSRKSISHPESGDPPTMAEGEGYRNPTEVQMSQLVLPCHTNHRGELSIGQLLKWIDTTACLSAERHAGCPCVTASMDDIYFDHTISVGQVVNIKAKVNRAFNSSMEVGIQVVSEDLCSEKQWSVCKALATFVAHRELSKVKLKQVIPLTEEEKTEHGVAAERRRMRLVYADTIKDLLTHCVIQDDLDKDCSNMVPAEKTRVESVELVLPPHANHQGNTFGGQIMAWMENVATIAASRLCHAHPTLKAIEMFHFRGPSQVGDRLVLKAIVNNAFKHSMEVGVCVEAYRQEAETQRRHINSAFMTFVVLDKDDQPQKLPWIRPQPGEGERRYREASARKKIRLDRKYLVSCKQAEVALSVPWDPSNQVYLSYYNVSSLKTLMAKDNWVLSVEISEVRLYILEEDFLSFHLEMVVNVDAAQVFQLLSDLRRRPEWDKHYRSVELVQQVDEDDAIYHVISPALSGNTKPQDFVILASRRKPCDNGDPYVIALRSVTLPTHHETPEYQRGETLCSGFCLWREGDQMTKVSYYNQATPGFLNYVTTNVSGLSSEFYNTFKACESFLLDNRNDLAPSLQTL</sequence>
<keyword id="KW-0963">Cytoplasm</keyword>
<keyword id="KW-0276">Fatty acid metabolism</keyword>
<keyword id="KW-0378">Hydrolase</keyword>
<keyword id="KW-0443">Lipid metabolism</keyword>
<keyword id="KW-0496">Mitochondrion</keyword>
<keyword id="KW-0597">Phosphoprotein</keyword>
<keyword id="KW-1185">Reference proteome</keyword>
<keyword id="KW-0677">Repeat</keyword>
<keyword id="KW-0719">Serine esterase</keyword>
<keyword id="KW-0809">Transit peptide</keyword>
<evidence type="ECO:0000250" key="1"/>
<evidence type="ECO:0000250" key="2">
    <source>
        <dbReference type="UniProtKB" id="Q8WXI4"/>
    </source>
</evidence>
<evidence type="ECO:0000255" key="3"/>
<evidence type="ECO:0000255" key="4">
    <source>
        <dbReference type="PROSITE-ProRule" id="PRU00197"/>
    </source>
</evidence>
<evidence type="ECO:0000255" key="5">
    <source>
        <dbReference type="PROSITE-ProRule" id="PRU01106"/>
    </source>
</evidence>
<evidence type="ECO:0000256" key="6">
    <source>
        <dbReference type="SAM" id="MobiDB-lite"/>
    </source>
</evidence>
<evidence type="ECO:0007744" key="7">
    <source>
    </source>
</evidence>
<comment type="function">
    <text evidence="2">Has an acyl-CoA thioesterase activity with a preference for the long chain fatty acyl-CoA thioesters hexadecanoyl-CoA/palmitoyl-CoA and tetradecanoyl-CoA/myristoyl-CoA which are the main substrates in the mitochondrial beta-oxidation pathway.</text>
</comment>
<comment type="catalytic activity">
    <reaction evidence="2">
        <text>hexadecanoyl-CoA + H2O = hexadecanoate + CoA + H(+)</text>
        <dbReference type="Rhea" id="RHEA:16645"/>
        <dbReference type="ChEBI" id="CHEBI:7896"/>
        <dbReference type="ChEBI" id="CHEBI:15377"/>
        <dbReference type="ChEBI" id="CHEBI:15378"/>
        <dbReference type="ChEBI" id="CHEBI:57287"/>
        <dbReference type="ChEBI" id="CHEBI:57379"/>
        <dbReference type="EC" id="3.1.2.2"/>
    </reaction>
    <physiologicalReaction direction="left-to-right" evidence="2">
        <dbReference type="Rhea" id="RHEA:16646"/>
    </physiologicalReaction>
</comment>
<comment type="catalytic activity">
    <reaction evidence="2">
        <text>tetradecanoyl-CoA + H2O = tetradecanoate + CoA + H(+)</text>
        <dbReference type="Rhea" id="RHEA:40119"/>
        <dbReference type="ChEBI" id="CHEBI:15377"/>
        <dbReference type="ChEBI" id="CHEBI:15378"/>
        <dbReference type="ChEBI" id="CHEBI:30807"/>
        <dbReference type="ChEBI" id="CHEBI:57287"/>
        <dbReference type="ChEBI" id="CHEBI:57385"/>
    </reaction>
    <physiologicalReaction direction="left-to-right" evidence="2">
        <dbReference type="Rhea" id="RHEA:40120"/>
    </physiologicalReaction>
</comment>
<comment type="catalytic activity">
    <reaction evidence="2">
        <text>dodecanoyl-CoA + H2O = dodecanoate + CoA + H(+)</text>
        <dbReference type="Rhea" id="RHEA:30135"/>
        <dbReference type="ChEBI" id="CHEBI:15377"/>
        <dbReference type="ChEBI" id="CHEBI:15378"/>
        <dbReference type="ChEBI" id="CHEBI:18262"/>
        <dbReference type="ChEBI" id="CHEBI:57287"/>
        <dbReference type="ChEBI" id="CHEBI:57375"/>
    </reaction>
    <physiologicalReaction direction="left-to-right" evidence="2">
        <dbReference type="Rhea" id="RHEA:30136"/>
    </physiologicalReaction>
</comment>
<comment type="catalytic activity">
    <reaction evidence="2">
        <text>butanoyl-CoA + H2O = butanoate + CoA + H(+)</text>
        <dbReference type="Rhea" id="RHEA:40111"/>
        <dbReference type="ChEBI" id="CHEBI:15377"/>
        <dbReference type="ChEBI" id="CHEBI:15378"/>
        <dbReference type="ChEBI" id="CHEBI:17968"/>
        <dbReference type="ChEBI" id="CHEBI:57287"/>
        <dbReference type="ChEBI" id="CHEBI:57371"/>
    </reaction>
    <physiologicalReaction direction="left-to-right" evidence="2">
        <dbReference type="Rhea" id="RHEA:40112"/>
    </physiologicalReaction>
</comment>
<comment type="pathway">
    <text evidence="2">Lipid metabolism; fatty acid metabolism.</text>
</comment>
<comment type="subcellular location">
    <subcellularLocation>
        <location evidence="2">Mitochondrion matrix</location>
    </subcellularLocation>
    <subcellularLocation>
        <location evidence="2">Cytoplasm</location>
    </subcellularLocation>
</comment>
<comment type="induction">
    <text>By cold exposure and repressed by heat exposure.</text>
</comment>
<proteinExistence type="evidence at protein level"/>
<organism>
    <name type="scientific">Mus musculus</name>
    <name type="common">Mouse</name>
    <dbReference type="NCBI Taxonomy" id="10090"/>
    <lineage>
        <taxon>Eukaryota</taxon>
        <taxon>Metazoa</taxon>
        <taxon>Chordata</taxon>
        <taxon>Craniata</taxon>
        <taxon>Vertebrata</taxon>
        <taxon>Euteleostomi</taxon>
        <taxon>Mammalia</taxon>
        <taxon>Eutheria</taxon>
        <taxon>Euarchontoglires</taxon>
        <taxon>Glires</taxon>
        <taxon>Rodentia</taxon>
        <taxon>Myomorpha</taxon>
        <taxon>Muroidea</taxon>
        <taxon>Muridae</taxon>
        <taxon>Murinae</taxon>
        <taxon>Mus</taxon>
        <taxon>Mus</taxon>
    </lineage>
</organism>